<keyword id="KW-0963">Cytoplasm</keyword>
<keyword id="KW-0274">FAD</keyword>
<keyword id="KW-0285">Flavoprotein</keyword>
<keyword id="KW-0520">NAD</keyword>
<keyword id="KW-1185">Reference proteome</keyword>
<keyword id="KW-0819">tRNA processing</keyword>
<accession>A1VIB1</accession>
<comment type="function">
    <text evidence="1">NAD-binding protein involved in the addition of a carboxymethylaminomethyl (cmnm) group at the wobble position (U34) of certain tRNAs, forming tRNA-cmnm(5)s(2)U34.</text>
</comment>
<comment type="cofactor">
    <cofactor evidence="1">
        <name>FAD</name>
        <dbReference type="ChEBI" id="CHEBI:57692"/>
    </cofactor>
</comment>
<comment type="subunit">
    <text evidence="1">Homodimer. Heterotetramer of two MnmE and two MnmG subunits.</text>
</comment>
<comment type="subcellular location">
    <subcellularLocation>
        <location evidence="1">Cytoplasm</location>
    </subcellularLocation>
</comment>
<comment type="similarity">
    <text evidence="1">Belongs to the MnmG family.</text>
</comment>
<name>MNMG_POLNA</name>
<feature type="chain" id="PRO_0000345315" description="tRNA uridine 5-carboxymethylaminomethyl modification enzyme MnmG">
    <location>
        <begin position="1"/>
        <end position="667"/>
    </location>
</feature>
<feature type="binding site" evidence="1">
    <location>
        <begin position="13"/>
        <end position="18"/>
    </location>
    <ligand>
        <name>FAD</name>
        <dbReference type="ChEBI" id="CHEBI:57692"/>
    </ligand>
</feature>
<feature type="binding site" evidence="1">
    <location>
        <begin position="280"/>
        <end position="294"/>
    </location>
    <ligand>
        <name>NAD(+)</name>
        <dbReference type="ChEBI" id="CHEBI:57540"/>
    </ligand>
</feature>
<reference key="1">
    <citation type="journal article" date="2009" name="Environ. Microbiol.">
        <title>The genome of Polaromonas naphthalenivorans strain CJ2, isolated from coal tar-contaminated sediment, reveals physiological and metabolic versatility and evolution through extensive horizontal gene transfer.</title>
        <authorList>
            <person name="Yagi J.M."/>
            <person name="Sims D."/>
            <person name="Brettin T."/>
            <person name="Bruce D."/>
            <person name="Madsen E.L."/>
        </authorList>
    </citation>
    <scope>NUCLEOTIDE SEQUENCE [LARGE SCALE GENOMIC DNA]</scope>
    <source>
        <strain>CJ2</strain>
    </source>
</reference>
<organism>
    <name type="scientific">Polaromonas naphthalenivorans (strain CJ2)</name>
    <dbReference type="NCBI Taxonomy" id="365044"/>
    <lineage>
        <taxon>Bacteria</taxon>
        <taxon>Pseudomonadati</taxon>
        <taxon>Pseudomonadota</taxon>
        <taxon>Betaproteobacteria</taxon>
        <taxon>Burkholderiales</taxon>
        <taxon>Comamonadaceae</taxon>
        <taxon>Polaromonas</taxon>
    </lineage>
</organism>
<sequence length="667" mass="73249">MFYPQEFDVIVVGGGHAGTEAALAAARMGCKTLLLTHNIETLGQMSCNPSIGGIGKGHLVKEVDAMGGAMALATDEGGIQFRILNGSKGPAVRATRAQADRILYKAAIRRMIENQPNLWLFQQAVDDLMVEGDRVVGAVTQVGIKFRARTVVLTAGTFLDGKIHVGLNNYPAGRAGDPPAVSLSARLKELKLPQGRLKTGTPPRIDGRSIDFSKCGVQPGDGMPGGTPGPVPVFSFMGGNVPHPKQVPCWITHTNERTHDIIRSGFDRSPMFTGKIDGVGPRYCPSVEDKINRFAGKDSHQIFLEPEGLTTHEIYPNGISTSLPFDIQYALVRSMAGMENAHILRPGYAIEYDYFDPRALKTNFETRAIGGLFFAGQINGTTGYEEAAAQGMFAGINAALQCQEKEAWLPKRDEAYLGVLVDDLITKGVTEPYRMFTSRAEFRLMLREDNADMRLTEKGRELGLVDDARWDAFNRKRDIVSRETQRLRALWINPNNLPASEAERVLGKAIEREYNLADLLRRPDVNYAGLMSLDGGRYANPEIPTGNEDVSRETSTDSALPADLVKSVIEQIEITAKYAGYIDLQKVEVERASHYENLKLPADLDYLQVSALSFEARQMLSKHRPETLGLASRIQGITPATISLLLVHLKKNLWKNTTPLKSAEAEA</sequence>
<dbReference type="EMBL" id="CP000529">
    <property type="protein sequence ID" value="ABM35389.1"/>
    <property type="molecule type" value="Genomic_DNA"/>
</dbReference>
<dbReference type="RefSeq" id="WP_011799499.1">
    <property type="nucleotide sequence ID" value="NC_008781.1"/>
</dbReference>
<dbReference type="SMR" id="A1VIB1"/>
<dbReference type="STRING" id="365044.Pnap_0063"/>
<dbReference type="KEGG" id="pna:Pnap_0063"/>
<dbReference type="eggNOG" id="COG0445">
    <property type="taxonomic scope" value="Bacteria"/>
</dbReference>
<dbReference type="HOGENOM" id="CLU_007831_2_2_4"/>
<dbReference type="OrthoDB" id="9815560at2"/>
<dbReference type="Proteomes" id="UP000000644">
    <property type="component" value="Chromosome"/>
</dbReference>
<dbReference type="GO" id="GO:0005829">
    <property type="term" value="C:cytosol"/>
    <property type="evidence" value="ECO:0007669"/>
    <property type="project" value="TreeGrafter"/>
</dbReference>
<dbReference type="GO" id="GO:0050660">
    <property type="term" value="F:flavin adenine dinucleotide binding"/>
    <property type="evidence" value="ECO:0007669"/>
    <property type="project" value="UniProtKB-UniRule"/>
</dbReference>
<dbReference type="GO" id="GO:0030488">
    <property type="term" value="P:tRNA methylation"/>
    <property type="evidence" value="ECO:0007669"/>
    <property type="project" value="TreeGrafter"/>
</dbReference>
<dbReference type="GO" id="GO:0002098">
    <property type="term" value="P:tRNA wobble uridine modification"/>
    <property type="evidence" value="ECO:0007669"/>
    <property type="project" value="InterPro"/>
</dbReference>
<dbReference type="FunFam" id="1.10.150.570:FF:000001">
    <property type="entry name" value="tRNA uridine 5-carboxymethylaminomethyl modification enzyme MnmG"/>
    <property type="match status" value="1"/>
</dbReference>
<dbReference type="FunFam" id="3.50.50.60:FF:000002">
    <property type="entry name" value="tRNA uridine 5-carboxymethylaminomethyl modification enzyme MnmG"/>
    <property type="match status" value="1"/>
</dbReference>
<dbReference type="FunFam" id="3.50.50.60:FF:000010">
    <property type="entry name" value="tRNA uridine 5-carboxymethylaminomethyl modification enzyme MnmG"/>
    <property type="match status" value="1"/>
</dbReference>
<dbReference type="Gene3D" id="3.50.50.60">
    <property type="entry name" value="FAD/NAD(P)-binding domain"/>
    <property type="match status" value="2"/>
</dbReference>
<dbReference type="Gene3D" id="1.10.150.570">
    <property type="entry name" value="GidA associated domain, C-terminal subdomain"/>
    <property type="match status" value="1"/>
</dbReference>
<dbReference type="Gene3D" id="1.10.10.1800">
    <property type="entry name" value="tRNA uridine 5-carboxymethylaminomethyl modification enzyme MnmG/GidA"/>
    <property type="match status" value="1"/>
</dbReference>
<dbReference type="HAMAP" id="MF_00129">
    <property type="entry name" value="MnmG_GidA"/>
    <property type="match status" value="1"/>
</dbReference>
<dbReference type="InterPro" id="IPR036188">
    <property type="entry name" value="FAD/NAD-bd_sf"/>
</dbReference>
<dbReference type="InterPro" id="IPR049312">
    <property type="entry name" value="GIDA_C_N"/>
</dbReference>
<dbReference type="InterPro" id="IPR004416">
    <property type="entry name" value="MnmG"/>
</dbReference>
<dbReference type="InterPro" id="IPR002218">
    <property type="entry name" value="MnmG-rel"/>
</dbReference>
<dbReference type="InterPro" id="IPR020595">
    <property type="entry name" value="MnmG-rel_CS"/>
</dbReference>
<dbReference type="InterPro" id="IPR026904">
    <property type="entry name" value="MnmG_C"/>
</dbReference>
<dbReference type="InterPro" id="IPR047001">
    <property type="entry name" value="MnmG_C_subdom"/>
</dbReference>
<dbReference type="InterPro" id="IPR044920">
    <property type="entry name" value="MnmG_C_subdom_sf"/>
</dbReference>
<dbReference type="InterPro" id="IPR040131">
    <property type="entry name" value="MnmG_N"/>
</dbReference>
<dbReference type="NCBIfam" id="TIGR00136">
    <property type="entry name" value="mnmG_gidA"/>
    <property type="match status" value="1"/>
</dbReference>
<dbReference type="PANTHER" id="PTHR11806">
    <property type="entry name" value="GLUCOSE INHIBITED DIVISION PROTEIN A"/>
    <property type="match status" value="1"/>
</dbReference>
<dbReference type="PANTHER" id="PTHR11806:SF0">
    <property type="entry name" value="PROTEIN MTO1 HOMOLOG, MITOCHONDRIAL"/>
    <property type="match status" value="1"/>
</dbReference>
<dbReference type="Pfam" id="PF01134">
    <property type="entry name" value="GIDA"/>
    <property type="match status" value="1"/>
</dbReference>
<dbReference type="Pfam" id="PF21680">
    <property type="entry name" value="GIDA_C_1st"/>
    <property type="match status" value="1"/>
</dbReference>
<dbReference type="Pfam" id="PF13932">
    <property type="entry name" value="SAM_GIDA_C"/>
    <property type="match status" value="1"/>
</dbReference>
<dbReference type="SMART" id="SM01228">
    <property type="entry name" value="GIDA_assoc_3"/>
    <property type="match status" value="1"/>
</dbReference>
<dbReference type="SUPFAM" id="SSF51905">
    <property type="entry name" value="FAD/NAD(P)-binding domain"/>
    <property type="match status" value="1"/>
</dbReference>
<dbReference type="PROSITE" id="PS01280">
    <property type="entry name" value="GIDA_1"/>
    <property type="match status" value="1"/>
</dbReference>
<dbReference type="PROSITE" id="PS01281">
    <property type="entry name" value="GIDA_2"/>
    <property type="match status" value="1"/>
</dbReference>
<evidence type="ECO:0000255" key="1">
    <source>
        <dbReference type="HAMAP-Rule" id="MF_00129"/>
    </source>
</evidence>
<gene>
    <name evidence="1" type="primary">mnmG</name>
    <name evidence="1" type="synonym">gidA</name>
    <name type="ordered locus">Pnap_0063</name>
</gene>
<protein>
    <recommendedName>
        <fullName evidence="1">tRNA uridine 5-carboxymethylaminomethyl modification enzyme MnmG</fullName>
    </recommendedName>
    <alternativeName>
        <fullName evidence="1">Glucose-inhibited division protein A</fullName>
    </alternativeName>
</protein>
<proteinExistence type="inferred from homology"/>